<comment type="function">
    <text evidence="1">Required for the assembly of axonemal inner and outer dynein arms. Involved in preassembly of dyneins into complexes before their transport into cilia (By similarity).</text>
</comment>
<comment type="subcellular location">
    <subcellularLocation>
        <location evidence="1">Cytoplasm</location>
    </subcellularLocation>
    <subcellularLocation>
        <location evidence="2">Dynein axonemal particle</location>
    </subcellularLocation>
</comment>
<comment type="similarity">
    <text evidence="3">Belongs to the DNAAF3 family.</text>
</comment>
<protein>
    <recommendedName>
        <fullName>Dynein axonemal assembly factor 3</fullName>
    </recommendedName>
</protein>
<name>DAAF3_XENLA</name>
<keyword id="KW-0970">Cilium biogenesis/degradation</keyword>
<keyword id="KW-0963">Cytoplasm</keyword>
<keyword id="KW-1185">Reference proteome</keyword>
<accession>Q32NQ7</accession>
<proteinExistence type="evidence at transcript level"/>
<feature type="chain" id="PRO_0000297583" description="Dynein axonemal assembly factor 3">
    <location>
        <begin position="1"/>
        <end position="485"/>
    </location>
</feature>
<gene>
    <name type="primary">dnaaf3</name>
</gene>
<organism>
    <name type="scientific">Xenopus laevis</name>
    <name type="common">African clawed frog</name>
    <dbReference type="NCBI Taxonomy" id="8355"/>
    <lineage>
        <taxon>Eukaryota</taxon>
        <taxon>Metazoa</taxon>
        <taxon>Chordata</taxon>
        <taxon>Craniata</taxon>
        <taxon>Vertebrata</taxon>
        <taxon>Euteleostomi</taxon>
        <taxon>Amphibia</taxon>
        <taxon>Batrachia</taxon>
        <taxon>Anura</taxon>
        <taxon>Pipoidea</taxon>
        <taxon>Pipidae</taxon>
        <taxon>Xenopodinae</taxon>
        <taxon>Xenopus</taxon>
        <taxon>Xenopus</taxon>
    </lineage>
</organism>
<dbReference type="EMBL" id="BC108525">
    <property type="protein sequence ID" value="AAI08526.1"/>
    <property type="molecule type" value="mRNA"/>
</dbReference>
<dbReference type="RefSeq" id="NP_001089839.1">
    <property type="nucleotide sequence ID" value="NM_001096370.1"/>
</dbReference>
<dbReference type="DNASU" id="734905"/>
<dbReference type="GeneID" id="734905"/>
<dbReference type="KEGG" id="xla:734905"/>
<dbReference type="AGR" id="Xenbase:XB-GENE-6254736"/>
<dbReference type="CTD" id="734905"/>
<dbReference type="Xenbase" id="XB-GENE-6254736">
    <property type="gene designation" value="dnaaf3.L"/>
</dbReference>
<dbReference type="OrthoDB" id="538817at2759"/>
<dbReference type="Proteomes" id="UP000186698">
    <property type="component" value="Chromosome 7L"/>
</dbReference>
<dbReference type="Bgee" id="734905">
    <property type="expression patterns" value="Expressed in testis and 11 other cell types or tissues"/>
</dbReference>
<dbReference type="GO" id="GO:0120293">
    <property type="term" value="C:dynein axonemal particle"/>
    <property type="evidence" value="ECO:0000314"/>
    <property type="project" value="UniProtKB"/>
</dbReference>
<dbReference type="GO" id="GO:0070286">
    <property type="term" value="P:axonemal dynein complex assembly"/>
    <property type="evidence" value="ECO:0000250"/>
    <property type="project" value="UniProtKB"/>
</dbReference>
<dbReference type="GO" id="GO:0044458">
    <property type="term" value="P:motile cilium assembly"/>
    <property type="evidence" value="ECO:0000250"/>
    <property type="project" value="UniProtKB"/>
</dbReference>
<dbReference type="InterPro" id="IPR039304">
    <property type="entry name" value="DNAAF3"/>
</dbReference>
<dbReference type="InterPro" id="IPR028235">
    <property type="entry name" value="DNAAF3_C"/>
</dbReference>
<dbReference type="InterPro" id="IPR027974">
    <property type="entry name" value="DUF4470"/>
</dbReference>
<dbReference type="PANTHER" id="PTHR22118">
    <property type="entry name" value="DYNEIN ASSEMBLY FACTOR 3, AXONEMAL"/>
    <property type="match status" value="1"/>
</dbReference>
<dbReference type="PANTHER" id="PTHR22118:SF14">
    <property type="entry name" value="DYNEIN AXONEMAL ASSEMBLY FACTOR 3"/>
    <property type="match status" value="1"/>
</dbReference>
<dbReference type="Pfam" id="PF14737">
    <property type="entry name" value="DUF4470"/>
    <property type="match status" value="1"/>
</dbReference>
<dbReference type="Pfam" id="PF14740">
    <property type="entry name" value="DUF4471"/>
    <property type="match status" value="1"/>
</dbReference>
<reference key="1">
    <citation type="submission" date="2005-11" db="EMBL/GenBank/DDBJ databases">
        <authorList>
            <consortium name="NIH - Xenopus Gene Collection (XGC) project"/>
        </authorList>
    </citation>
    <scope>NUCLEOTIDE SEQUENCE [LARGE SCALE MRNA]</scope>
    <source>
        <tissue>Embryo</tissue>
    </source>
</reference>
<reference key="2">
    <citation type="journal article" date="2018" name="Elife">
        <title>A liquid-like organelle at the root of motile ciliopathy.</title>
        <authorList>
            <person name="Huizar R.L."/>
            <person name="Lee C."/>
            <person name="Boulgakov A.A."/>
            <person name="Horani A."/>
            <person name="Tu F."/>
            <person name="Marcotte E.M."/>
            <person name="Brody S.L."/>
            <person name="Wallingford J.B."/>
        </authorList>
    </citation>
    <scope>SUBCELLULAR LOCATION</scope>
</reference>
<evidence type="ECO:0000250" key="1"/>
<evidence type="ECO:0000269" key="2">
    <source>
    </source>
</evidence>
<evidence type="ECO:0000305" key="3"/>
<sequence>MAAAAGRRMGPSWWGFSPALDLQVHCLQGTIQHLTSSDGLPELNILLVGGGDGRHLLKTICQASRWPHRKLKFFIIESDLELLARHMLFLSLALEHPEQMGLQEKSELFLELFGNSLIRSKTANYLQEKSELFIQCVTDPDYQQCVMPFLNLSSIKFKERDELEDIFKFWRIADPKLFPIDKYWDGKNRRHLGTRYDSRKGAYDWDLSMKLHDRGAGVINSREYNYWREKGVAFMNREGVYDVPNKTLASQMVVPQSSGKVLTRGYWGDITTSPYVAFGIETEEKSLLETANGVHVKSAQEIALHNIISLFHELATGKVYSVPASGQAEAELVKPVGDYKTNGDQTAAETIEEKAEAEDTKQSKYKGFITLNNVEIHFLPLSWVNELHCKGRFTNFFNLLYFSSSMVHLLKPEYKVIAASKATLVLELTKFMVDLQADKVQSYVSIVTKLAQGAGFTSDEPIDWKTHYIARFERGDDSVELQTAQ</sequence>